<accession>A6QK59</accession>
<dbReference type="EC" id="3.2.-.-"/>
<dbReference type="EMBL" id="AP009351">
    <property type="protein sequence ID" value="BAF68741.1"/>
    <property type="molecule type" value="Genomic_DNA"/>
</dbReference>
<dbReference type="RefSeq" id="WP_000751267.1">
    <property type="nucleotide sequence ID" value="NZ_JBBIAE010000005.1"/>
</dbReference>
<dbReference type="SMR" id="A6QK59"/>
<dbReference type="KEGG" id="sae:NWMN_2469"/>
<dbReference type="HOGENOM" id="CLU_099865_0_0_9"/>
<dbReference type="Proteomes" id="UP000006386">
    <property type="component" value="Chromosome"/>
</dbReference>
<dbReference type="GO" id="GO:0005576">
    <property type="term" value="C:extracellular region"/>
    <property type="evidence" value="ECO:0007669"/>
    <property type="project" value="UniProtKB-SubCell"/>
</dbReference>
<dbReference type="GO" id="GO:0016798">
    <property type="term" value="F:hydrolase activity, acting on glycosyl bonds"/>
    <property type="evidence" value="ECO:0007669"/>
    <property type="project" value="UniProtKB-KW"/>
</dbReference>
<dbReference type="Gene3D" id="1.10.530.10">
    <property type="match status" value="1"/>
</dbReference>
<dbReference type="InterPro" id="IPR023346">
    <property type="entry name" value="Lysozyme-like_dom_sf"/>
</dbReference>
<dbReference type="InterPro" id="IPR008258">
    <property type="entry name" value="Transglycosylase_SLT_dom_1"/>
</dbReference>
<dbReference type="Pfam" id="PF01464">
    <property type="entry name" value="SLT"/>
    <property type="match status" value="1"/>
</dbReference>
<dbReference type="SUPFAM" id="SSF53955">
    <property type="entry name" value="Lysozyme-like"/>
    <property type="match status" value="1"/>
</dbReference>
<reference key="1">
    <citation type="journal article" date="2008" name="J. Bacteriol.">
        <title>Genome sequence of Staphylococcus aureus strain Newman and comparative analysis of staphylococcal genomes: polymorphism and evolution of two major pathogenicity islands.</title>
        <authorList>
            <person name="Baba T."/>
            <person name="Bae T."/>
            <person name="Schneewind O."/>
            <person name="Takeuchi F."/>
            <person name="Hiramatsu K."/>
        </authorList>
    </citation>
    <scope>NUCLEOTIDE SEQUENCE [LARGE SCALE GENOMIC DNA]</scope>
    <source>
        <strain>Newman</strain>
    </source>
</reference>
<comment type="function">
    <text evidence="1">Is able to cleave peptidoglycan.</text>
</comment>
<comment type="subcellular location">
    <subcellularLocation>
        <location evidence="1">Secreted</location>
    </subcellularLocation>
</comment>
<comment type="similarity">
    <text evidence="2">Belongs to the transglycosylase family. IsaA subfamily.</text>
</comment>
<evidence type="ECO:0000250" key="1"/>
<evidence type="ECO:0000305" key="2"/>
<protein>
    <recommendedName>
        <fullName>Probable transglycosylase IsaA</fullName>
        <ecNumber>3.2.-.-</ecNumber>
    </recommendedName>
    <alternativeName>
        <fullName>Immunodominant staphylococcal antigen A</fullName>
    </alternativeName>
</protein>
<gene>
    <name type="primary">isaA</name>
    <name type="ordered locus">NWMN_2469</name>
</gene>
<name>ISAA_STAAE</name>
<proteinExistence type="inferred from homology"/>
<feature type="signal peptide" evidence="1">
    <location>
        <begin position="1"/>
        <end position="29"/>
    </location>
</feature>
<feature type="chain" id="PRO_0000329002" description="Probable transglycosylase IsaA">
    <location>
        <begin position="30"/>
        <end position="233"/>
    </location>
</feature>
<keyword id="KW-0326">Glycosidase</keyword>
<keyword id="KW-0378">Hydrolase</keyword>
<keyword id="KW-0964">Secreted</keyword>
<keyword id="KW-0732">Signal</keyword>
<sequence length="233" mass="24203">MKKTIMASSLAVALGVTGYAAGTGHQAHAAEVNVDQAHLVDLAHNHQDQLNAAPIKDGAYDIHFVKDGFQYNFTSNGTTWSWSYEAANGQTAGFSNVAGADYTTSYNQGSNVQSVSYNAQSSNSNVEAVSAPTYHNYSTSTTSSSVRLSNGNTAGATGSSAAQIMAQRTGVSASTWAAIIARESNGQVNAYNPSGASGLFQTMPGWGPTNTVDQQINAAVKAYKAQGLGAWGF</sequence>
<organism>
    <name type="scientific">Staphylococcus aureus (strain Newman)</name>
    <dbReference type="NCBI Taxonomy" id="426430"/>
    <lineage>
        <taxon>Bacteria</taxon>
        <taxon>Bacillati</taxon>
        <taxon>Bacillota</taxon>
        <taxon>Bacilli</taxon>
        <taxon>Bacillales</taxon>
        <taxon>Staphylococcaceae</taxon>
        <taxon>Staphylococcus</taxon>
    </lineage>
</organism>